<protein>
    <recommendedName>
        <fullName evidence="1">Adenylate kinase</fullName>
        <shortName evidence="1">AK</shortName>
        <ecNumber evidence="1">2.7.4.3</ecNumber>
    </recommendedName>
    <alternativeName>
        <fullName evidence="1">ATP-AMP transphosphorylase</fullName>
    </alternativeName>
    <alternativeName>
        <fullName evidence="1">ATP:AMP phosphotransferase</fullName>
    </alternativeName>
    <alternativeName>
        <fullName evidence="1">Adenylate monophosphate kinase</fullName>
    </alternativeName>
</protein>
<feature type="chain" id="PRO_1000191150" description="Adenylate kinase">
    <location>
        <begin position="1"/>
        <end position="214"/>
    </location>
</feature>
<feature type="region of interest" description="NMP" evidence="1">
    <location>
        <begin position="30"/>
        <end position="59"/>
    </location>
</feature>
<feature type="region of interest" description="LID" evidence="1">
    <location>
        <begin position="126"/>
        <end position="163"/>
    </location>
</feature>
<feature type="binding site" evidence="1">
    <location>
        <begin position="10"/>
        <end position="15"/>
    </location>
    <ligand>
        <name>ATP</name>
        <dbReference type="ChEBI" id="CHEBI:30616"/>
    </ligand>
</feature>
<feature type="binding site" evidence="1">
    <location>
        <position position="31"/>
    </location>
    <ligand>
        <name>AMP</name>
        <dbReference type="ChEBI" id="CHEBI:456215"/>
    </ligand>
</feature>
<feature type="binding site" evidence="1">
    <location>
        <position position="36"/>
    </location>
    <ligand>
        <name>AMP</name>
        <dbReference type="ChEBI" id="CHEBI:456215"/>
    </ligand>
</feature>
<feature type="binding site" evidence="1">
    <location>
        <begin position="57"/>
        <end position="59"/>
    </location>
    <ligand>
        <name>AMP</name>
        <dbReference type="ChEBI" id="CHEBI:456215"/>
    </ligand>
</feature>
<feature type="binding site" evidence="1">
    <location>
        <begin position="85"/>
        <end position="88"/>
    </location>
    <ligand>
        <name>AMP</name>
        <dbReference type="ChEBI" id="CHEBI:456215"/>
    </ligand>
</feature>
<feature type="binding site" evidence="1">
    <location>
        <position position="92"/>
    </location>
    <ligand>
        <name>AMP</name>
        <dbReference type="ChEBI" id="CHEBI:456215"/>
    </ligand>
</feature>
<feature type="binding site" evidence="1">
    <location>
        <position position="127"/>
    </location>
    <ligand>
        <name>ATP</name>
        <dbReference type="ChEBI" id="CHEBI:30616"/>
    </ligand>
</feature>
<feature type="binding site" evidence="1">
    <location>
        <position position="130"/>
    </location>
    <ligand>
        <name>Zn(2+)</name>
        <dbReference type="ChEBI" id="CHEBI:29105"/>
        <note>structural</note>
    </ligand>
</feature>
<feature type="binding site" evidence="1">
    <location>
        <position position="133"/>
    </location>
    <ligand>
        <name>Zn(2+)</name>
        <dbReference type="ChEBI" id="CHEBI:29105"/>
        <note>structural</note>
    </ligand>
</feature>
<feature type="binding site" evidence="1">
    <location>
        <position position="150"/>
    </location>
    <ligand>
        <name>Zn(2+)</name>
        <dbReference type="ChEBI" id="CHEBI:29105"/>
        <note>structural</note>
    </ligand>
</feature>
<feature type="binding site" evidence="1">
    <location>
        <position position="153"/>
    </location>
    <ligand>
        <name>Zn(2+)</name>
        <dbReference type="ChEBI" id="CHEBI:29105"/>
        <note>structural</note>
    </ligand>
</feature>
<feature type="binding site" evidence="1">
    <location>
        <position position="160"/>
    </location>
    <ligand>
        <name>AMP</name>
        <dbReference type="ChEBI" id="CHEBI:456215"/>
    </ligand>
</feature>
<feature type="binding site" evidence="1">
    <location>
        <position position="171"/>
    </location>
    <ligand>
        <name>AMP</name>
        <dbReference type="ChEBI" id="CHEBI:456215"/>
    </ligand>
</feature>
<feature type="binding site" evidence="1">
    <location>
        <position position="199"/>
    </location>
    <ligand>
        <name>ATP</name>
        <dbReference type="ChEBI" id="CHEBI:30616"/>
    </ligand>
</feature>
<gene>
    <name evidence="1" type="primary">adk</name>
    <name type="ordered locus">Geob_3604</name>
</gene>
<comment type="function">
    <text evidence="1">Catalyzes the reversible transfer of the terminal phosphate group between ATP and AMP. Plays an important role in cellular energy homeostasis and in adenine nucleotide metabolism.</text>
</comment>
<comment type="catalytic activity">
    <reaction evidence="1">
        <text>AMP + ATP = 2 ADP</text>
        <dbReference type="Rhea" id="RHEA:12973"/>
        <dbReference type="ChEBI" id="CHEBI:30616"/>
        <dbReference type="ChEBI" id="CHEBI:456215"/>
        <dbReference type="ChEBI" id="CHEBI:456216"/>
        <dbReference type="EC" id="2.7.4.3"/>
    </reaction>
</comment>
<comment type="pathway">
    <text evidence="1">Purine metabolism; AMP biosynthesis via salvage pathway; AMP from ADP: step 1/1.</text>
</comment>
<comment type="subunit">
    <text evidence="1">Monomer.</text>
</comment>
<comment type="subcellular location">
    <subcellularLocation>
        <location evidence="1">Cytoplasm</location>
    </subcellularLocation>
</comment>
<comment type="domain">
    <text evidence="1">Consists of three domains, a large central CORE domain and two small peripheral domains, NMPbind and LID, which undergo movements during catalysis. The LID domain closes over the site of phosphoryl transfer upon ATP binding. Assembling and dissambling the active center during each catalytic cycle provides an effective means to prevent ATP hydrolysis. Some bacteria have evolved a zinc-coordinating structure that stabilizes the LID domain.</text>
</comment>
<comment type="similarity">
    <text evidence="1">Belongs to the adenylate kinase family.</text>
</comment>
<evidence type="ECO:0000255" key="1">
    <source>
        <dbReference type="HAMAP-Rule" id="MF_00235"/>
    </source>
</evidence>
<reference key="1">
    <citation type="submission" date="2009-01" db="EMBL/GenBank/DDBJ databases">
        <title>Complete sequence of Geobacter sp. FRC-32.</title>
        <authorList>
            <consortium name="US DOE Joint Genome Institute"/>
            <person name="Lucas S."/>
            <person name="Copeland A."/>
            <person name="Lapidus A."/>
            <person name="Glavina del Rio T."/>
            <person name="Dalin E."/>
            <person name="Tice H."/>
            <person name="Bruce D."/>
            <person name="Goodwin L."/>
            <person name="Pitluck S."/>
            <person name="Saunders E."/>
            <person name="Brettin T."/>
            <person name="Detter J.C."/>
            <person name="Han C."/>
            <person name="Larimer F."/>
            <person name="Land M."/>
            <person name="Hauser L."/>
            <person name="Kyrpides N."/>
            <person name="Ovchinnikova G."/>
            <person name="Kostka J."/>
            <person name="Richardson P."/>
        </authorList>
    </citation>
    <scope>NUCLEOTIDE SEQUENCE [LARGE SCALE GENOMIC DNA]</scope>
    <source>
        <strain>DSM 22248 / JCM 15807 / FRC-32</strain>
    </source>
</reference>
<keyword id="KW-0067">ATP-binding</keyword>
<keyword id="KW-0963">Cytoplasm</keyword>
<keyword id="KW-0418">Kinase</keyword>
<keyword id="KW-0479">Metal-binding</keyword>
<keyword id="KW-0545">Nucleotide biosynthesis</keyword>
<keyword id="KW-0547">Nucleotide-binding</keyword>
<keyword id="KW-1185">Reference proteome</keyword>
<keyword id="KW-0808">Transferase</keyword>
<keyword id="KW-0862">Zinc</keyword>
<dbReference type="EC" id="2.7.4.3" evidence="1"/>
<dbReference type="EMBL" id="CP001390">
    <property type="protein sequence ID" value="ACM21945.1"/>
    <property type="molecule type" value="Genomic_DNA"/>
</dbReference>
<dbReference type="RefSeq" id="WP_012648673.1">
    <property type="nucleotide sequence ID" value="NC_011979.1"/>
</dbReference>
<dbReference type="SMR" id="B9M6F7"/>
<dbReference type="STRING" id="316067.Geob_3604"/>
<dbReference type="KEGG" id="geo:Geob_3604"/>
<dbReference type="eggNOG" id="COG0563">
    <property type="taxonomic scope" value="Bacteria"/>
</dbReference>
<dbReference type="HOGENOM" id="CLU_032354_1_2_7"/>
<dbReference type="OrthoDB" id="9805030at2"/>
<dbReference type="UniPathway" id="UPA00588">
    <property type="reaction ID" value="UER00649"/>
</dbReference>
<dbReference type="Proteomes" id="UP000007721">
    <property type="component" value="Chromosome"/>
</dbReference>
<dbReference type="GO" id="GO:0005737">
    <property type="term" value="C:cytoplasm"/>
    <property type="evidence" value="ECO:0007669"/>
    <property type="project" value="UniProtKB-SubCell"/>
</dbReference>
<dbReference type="GO" id="GO:0004017">
    <property type="term" value="F:adenylate kinase activity"/>
    <property type="evidence" value="ECO:0007669"/>
    <property type="project" value="UniProtKB-UniRule"/>
</dbReference>
<dbReference type="GO" id="GO:0005524">
    <property type="term" value="F:ATP binding"/>
    <property type="evidence" value="ECO:0007669"/>
    <property type="project" value="UniProtKB-UniRule"/>
</dbReference>
<dbReference type="GO" id="GO:0008270">
    <property type="term" value="F:zinc ion binding"/>
    <property type="evidence" value="ECO:0007669"/>
    <property type="project" value="UniProtKB-UniRule"/>
</dbReference>
<dbReference type="GO" id="GO:0044209">
    <property type="term" value="P:AMP salvage"/>
    <property type="evidence" value="ECO:0007669"/>
    <property type="project" value="UniProtKB-UniRule"/>
</dbReference>
<dbReference type="CDD" id="cd01428">
    <property type="entry name" value="ADK"/>
    <property type="match status" value="1"/>
</dbReference>
<dbReference type="FunFam" id="3.40.50.300:FF:000106">
    <property type="entry name" value="Adenylate kinase mitochondrial"/>
    <property type="match status" value="1"/>
</dbReference>
<dbReference type="Gene3D" id="3.40.50.300">
    <property type="entry name" value="P-loop containing nucleotide triphosphate hydrolases"/>
    <property type="match status" value="1"/>
</dbReference>
<dbReference type="HAMAP" id="MF_00235">
    <property type="entry name" value="Adenylate_kinase_Adk"/>
    <property type="match status" value="1"/>
</dbReference>
<dbReference type="InterPro" id="IPR006259">
    <property type="entry name" value="Adenyl_kin_sub"/>
</dbReference>
<dbReference type="InterPro" id="IPR000850">
    <property type="entry name" value="Adenylat/UMP-CMP_kin"/>
</dbReference>
<dbReference type="InterPro" id="IPR033690">
    <property type="entry name" value="Adenylat_kinase_CS"/>
</dbReference>
<dbReference type="InterPro" id="IPR007862">
    <property type="entry name" value="Adenylate_kinase_lid-dom"/>
</dbReference>
<dbReference type="InterPro" id="IPR027417">
    <property type="entry name" value="P-loop_NTPase"/>
</dbReference>
<dbReference type="NCBIfam" id="TIGR01351">
    <property type="entry name" value="adk"/>
    <property type="match status" value="1"/>
</dbReference>
<dbReference type="NCBIfam" id="NF001380">
    <property type="entry name" value="PRK00279.1-2"/>
    <property type="match status" value="1"/>
</dbReference>
<dbReference type="NCBIfam" id="NF001381">
    <property type="entry name" value="PRK00279.1-3"/>
    <property type="match status" value="1"/>
</dbReference>
<dbReference type="NCBIfam" id="NF011100">
    <property type="entry name" value="PRK14527.1"/>
    <property type="match status" value="1"/>
</dbReference>
<dbReference type="PANTHER" id="PTHR23359">
    <property type="entry name" value="NUCLEOTIDE KINASE"/>
    <property type="match status" value="1"/>
</dbReference>
<dbReference type="Pfam" id="PF00406">
    <property type="entry name" value="ADK"/>
    <property type="match status" value="1"/>
</dbReference>
<dbReference type="Pfam" id="PF05191">
    <property type="entry name" value="ADK_lid"/>
    <property type="match status" value="1"/>
</dbReference>
<dbReference type="PRINTS" id="PR00094">
    <property type="entry name" value="ADENYLTKNASE"/>
</dbReference>
<dbReference type="SUPFAM" id="SSF52540">
    <property type="entry name" value="P-loop containing nucleoside triphosphate hydrolases"/>
    <property type="match status" value="1"/>
</dbReference>
<dbReference type="PROSITE" id="PS00113">
    <property type="entry name" value="ADENYLATE_KINASE"/>
    <property type="match status" value="1"/>
</dbReference>
<accession>B9M6F7</accession>
<name>KAD_GEODF</name>
<organism>
    <name type="scientific">Geotalea daltonii (strain DSM 22248 / JCM 15807 / FRC-32)</name>
    <name type="common">Geobacter daltonii</name>
    <dbReference type="NCBI Taxonomy" id="316067"/>
    <lineage>
        <taxon>Bacteria</taxon>
        <taxon>Pseudomonadati</taxon>
        <taxon>Thermodesulfobacteriota</taxon>
        <taxon>Desulfuromonadia</taxon>
        <taxon>Geobacterales</taxon>
        <taxon>Geobacteraceae</taxon>
        <taxon>Geotalea</taxon>
    </lineage>
</organism>
<proteinExistence type="inferred from homology"/>
<sequence length="214" mass="23484">MNLILLGPPGAGKGTQAKLLIKKYRIPQISTGDILRAAVKDMTPMGGKAKSFMDAGALVPDEVVVGIIQERLNLADCSNGFILDGFPRTVAQADALAKVLSGLGRSIDHVISIVVDNEELLERVTGRRTCRNCGKGFHVSFDPPKSSGICDECSGELYQRDDDREDTMRKRLEVYWQQTSPLVEYYKNKSLLRSVEGVGSMEEIQQKIVSILQG</sequence>